<sequence>MEFRFENLLGAPYRGGNAVITKNTQLISPVGNRVSVTDLSKNHSVTLPLETSTNICRLASSPDGTFLLAVDEQNRCLFINLPRRVVLHRITFKDKVGALKFSPNGKFIAVGIGKLVEIWRSPGFRRAVLPFERVRTFANSDDKVVSLEWSLDSDYLLVGSRDLAARLFCVRKLKGVLNKPFLFLGHRDSVVGCFFGVDKMTNKVNRAFTIARDGYIFSWGYTEKDVKMDESEDGHSEPPSPVTPDRADEVMVENGGGVGTELKKRKEYDGKGLESDEEGDDDDEEYMHRGKWVLLRKDGCNQASAKVTACDYHQGLDMVVVGFSNGVFGLYQMPDFICIHLLSISRQKLTTAVFNERGNWLTFGCAKLGQLLVWDWRTETYILKQQGHYFDVNCVTYSPDSQLLATGADDNKVKVWNVMSGTCFITFTEHTNAVTALHFMADNHSLLSASLDGTVRAWDFKRYKNYKTYTTPTPRQFVSLTADPSGDVVCAGTLDSFEIFVWSKKTGQIKDILSGHEAPVHGLMFSPLTQLLASSSWDYTVRLWDVFASKGTVETFRHNHDVLTVAFRPDGKQLASSTLDGQINFWDTIEGVLMYTIEGRRDIAGGRVMTDRRSAANSSSGKCFTTLCYSADGGYILAAGTSRYICMYDIADQVLLRRFQISHNLSLDGVLDFLHSKKMTEAGPIDLIDDDNSDEEGGIDKQSRGNLGYDLPGSRPNRGRPIIRTKSLSIAPTGRSFAAATTEGVLIFSIDDTFIFDPTDLDIDVTPEAVEAAIEEDEVSRALALSMRLNEDSLIKKCIFAVAPADIKAVAISVRQKYLERLMEALVDLLENCPHLEFILHWCQEICKAHGSSIQRNYRTLLPALRSLQKAITRAHQDLADMCSSNEYTLRYLCSVPNNH</sequence>
<comment type="function">
    <text evidence="5 6">Involved in nucleolar processing of pre-18S ribosomal RNA. Plays a role early in ribosome biogenesis, especially in the maturation of 5.8S rRNA (PubMed:23382868). Required for guard cell functions (PubMed:23185391).</text>
</comment>
<comment type="subunit">
    <text evidence="1 4">Component of the ribosomal small subunit (SSU) processome (By similarity). Interacts with TBP1 in the nucleus (PubMed:19929880).</text>
</comment>
<comment type="subcellular location">
    <subcellularLocation>
        <location evidence="6">Nucleus</location>
        <location evidence="6">Nucleolus</location>
    </subcellularLocation>
    <subcellularLocation>
        <location evidence="4">Nucleus</location>
    </subcellularLocation>
</comment>
<comment type="alternative products">
    <event type="alternative splicing"/>
    <isoform>
        <id>Q8VYZ5-1</id>
        <name>1</name>
        <sequence type="displayed"/>
    </isoform>
    <isoform>
        <id>Q8VYZ5-2</id>
        <name>2</name>
        <sequence type="described" ref="VSP_058979"/>
    </isoform>
</comment>
<comment type="tissue specificity">
    <text evidence="6">Expressed constitutively and ubiquitously; observed in seeds, seedlings, roots, leaves, stems, flowers and siliques.</text>
</comment>
<comment type="induction">
    <text evidence="5">Induced by sucrose in guard cells.</text>
</comment>
<comment type="disruption phenotype">
    <text evidence="5 6">Impaired maturation of 5.8S rRNA, especially the processing at the 5' end. Reduced siliques size due to defects in embryo and female gametophyte development (PubMed:23382868). Defects in guard cell function leading to reduced stomatal conductance and impaired water-use efficiency (PubMed:23185391).</text>
</comment>
<comment type="similarity">
    <text evidence="9">Belongs to the WD repeat PWP2 family.</text>
</comment>
<comment type="sequence caution" evidence="9">
    <conflict type="erroneous gene model prediction">
        <sequence resource="EMBL-CDS" id="AAD39674"/>
    </conflict>
</comment>
<reference key="1">
    <citation type="journal article" date="2000" name="Nature">
        <title>Sequence and analysis of chromosome 1 of the plant Arabidopsis thaliana.</title>
        <authorList>
            <person name="Theologis A."/>
            <person name="Ecker J.R."/>
            <person name="Palm C.J."/>
            <person name="Federspiel N.A."/>
            <person name="Kaul S."/>
            <person name="White O."/>
            <person name="Alonso J."/>
            <person name="Altafi H."/>
            <person name="Araujo R."/>
            <person name="Bowman C.L."/>
            <person name="Brooks S.Y."/>
            <person name="Buehler E."/>
            <person name="Chan A."/>
            <person name="Chao Q."/>
            <person name="Chen H."/>
            <person name="Cheuk R.F."/>
            <person name="Chin C.W."/>
            <person name="Chung M.K."/>
            <person name="Conn L."/>
            <person name="Conway A.B."/>
            <person name="Conway A.R."/>
            <person name="Creasy T.H."/>
            <person name="Dewar K."/>
            <person name="Dunn P."/>
            <person name="Etgu P."/>
            <person name="Feldblyum T.V."/>
            <person name="Feng J.-D."/>
            <person name="Fong B."/>
            <person name="Fujii C.Y."/>
            <person name="Gill J.E."/>
            <person name="Goldsmith A.D."/>
            <person name="Haas B."/>
            <person name="Hansen N.F."/>
            <person name="Hughes B."/>
            <person name="Huizar L."/>
            <person name="Hunter J.L."/>
            <person name="Jenkins J."/>
            <person name="Johnson-Hopson C."/>
            <person name="Khan S."/>
            <person name="Khaykin E."/>
            <person name="Kim C.J."/>
            <person name="Koo H.L."/>
            <person name="Kremenetskaia I."/>
            <person name="Kurtz D.B."/>
            <person name="Kwan A."/>
            <person name="Lam B."/>
            <person name="Langin-Hooper S."/>
            <person name="Lee A."/>
            <person name="Lee J.M."/>
            <person name="Lenz C.A."/>
            <person name="Li J.H."/>
            <person name="Li Y.-P."/>
            <person name="Lin X."/>
            <person name="Liu S.X."/>
            <person name="Liu Z.A."/>
            <person name="Luros J.S."/>
            <person name="Maiti R."/>
            <person name="Marziali A."/>
            <person name="Militscher J."/>
            <person name="Miranda M."/>
            <person name="Nguyen M."/>
            <person name="Nierman W.C."/>
            <person name="Osborne B.I."/>
            <person name="Pai G."/>
            <person name="Peterson J."/>
            <person name="Pham P.K."/>
            <person name="Rizzo M."/>
            <person name="Rooney T."/>
            <person name="Rowley D."/>
            <person name="Sakano H."/>
            <person name="Salzberg S.L."/>
            <person name="Schwartz J.R."/>
            <person name="Shinn P."/>
            <person name="Southwick A.M."/>
            <person name="Sun H."/>
            <person name="Tallon L.J."/>
            <person name="Tambunga G."/>
            <person name="Toriumi M.J."/>
            <person name="Town C.D."/>
            <person name="Utterback T."/>
            <person name="Van Aken S."/>
            <person name="Vaysberg M."/>
            <person name="Vysotskaia V.S."/>
            <person name="Walker M."/>
            <person name="Wu D."/>
            <person name="Yu G."/>
            <person name="Fraser C.M."/>
            <person name="Venter J.C."/>
            <person name="Davis R.W."/>
        </authorList>
    </citation>
    <scope>NUCLEOTIDE SEQUENCE [LARGE SCALE GENOMIC DNA]</scope>
    <source>
        <strain>cv. Columbia</strain>
    </source>
</reference>
<reference key="2">
    <citation type="journal article" date="2017" name="Plant J.">
        <title>Araport11: a complete reannotation of the Arabidopsis thaliana reference genome.</title>
        <authorList>
            <person name="Cheng C.Y."/>
            <person name="Krishnakumar V."/>
            <person name="Chan A.P."/>
            <person name="Thibaud-Nissen F."/>
            <person name="Schobel S."/>
            <person name="Town C.D."/>
        </authorList>
    </citation>
    <scope>GENOME REANNOTATION</scope>
    <source>
        <strain>cv. Columbia</strain>
    </source>
</reference>
<reference key="3">
    <citation type="journal article" date="2003" name="Science">
        <title>Empirical analysis of transcriptional activity in the Arabidopsis genome.</title>
        <authorList>
            <person name="Yamada K."/>
            <person name="Lim J."/>
            <person name="Dale J.M."/>
            <person name="Chen H."/>
            <person name="Shinn P."/>
            <person name="Palm C.J."/>
            <person name="Southwick A.M."/>
            <person name="Wu H.C."/>
            <person name="Kim C.J."/>
            <person name="Nguyen M."/>
            <person name="Pham P.K."/>
            <person name="Cheuk R.F."/>
            <person name="Karlin-Newmann G."/>
            <person name="Liu S.X."/>
            <person name="Lam B."/>
            <person name="Sakano H."/>
            <person name="Wu T."/>
            <person name="Yu G."/>
            <person name="Miranda M."/>
            <person name="Quach H.L."/>
            <person name="Tripp M."/>
            <person name="Chang C.H."/>
            <person name="Lee J.M."/>
            <person name="Toriumi M.J."/>
            <person name="Chan M.M."/>
            <person name="Tang C.C."/>
            <person name="Onodera C.S."/>
            <person name="Deng J.M."/>
            <person name="Akiyama K."/>
            <person name="Ansari Y."/>
            <person name="Arakawa T."/>
            <person name="Banh J."/>
            <person name="Banno F."/>
            <person name="Bowser L."/>
            <person name="Brooks S.Y."/>
            <person name="Carninci P."/>
            <person name="Chao Q."/>
            <person name="Choy N."/>
            <person name="Enju A."/>
            <person name="Goldsmith A.D."/>
            <person name="Gurjal M."/>
            <person name="Hansen N.F."/>
            <person name="Hayashizaki Y."/>
            <person name="Johnson-Hopson C."/>
            <person name="Hsuan V.W."/>
            <person name="Iida K."/>
            <person name="Karnes M."/>
            <person name="Khan S."/>
            <person name="Koesema E."/>
            <person name="Ishida J."/>
            <person name="Jiang P.X."/>
            <person name="Jones T."/>
            <person name="Kawai J."/>
            <person name="Kamiya A."/>
            <person name="Meyers C."/>
            <person name="Nakajima M."/>
            <person name="Narusaka M."/>
            <person name="Seki M."/>
            <person name="Sakurai T."/>
            <person name="Satou M."/>
            <person name="Tamse R."/>
            <person name="Vaysberg M."/>
            <person name="Wallender E.K."/>
            <person name="Wong C."/>
            <person name="Yamamura Y."/>
            <person name="Yuan S."/>
            <person name="Shinozaki K."/>
            <person name="Davis R.W."/>
            <person name="Theologis A."/>
            <person name="Ecker J.R."/>
        </authorList>
    </citation>
    <scope>NUCLEOTIDE SEQUENCE [LARGE SCALE MRNA] (ISOFORM 1)</scope>
    <source>
        <strain>cv. Columbia</strain>
    </source>
</reference>
<reference key="4">
    <citation type="journal article" date="2008" name="Plant Cell">
        <title>Characterization of Arabidopsis and rice DWD proteins and their roles as substrate receptors for CUL4-RING E3 ubiquitin ligases.</title>
        <authorList>
            <person name="Lee J.H."/>
            <person name="Terzaghi W."/>
            <person name="Gusmaroli G."/>
            <person name="Charron J.B."/>
            <person name="Yoon H.J."/>
            <person name="Chen H."/>
            <person name="He Y.J."/>
            <person name="Xiong Y."/>
            <person name="Deng X.W."/>
        </authorList>
    </citation>
    <scope>GENE FAMILY</scope>
    <source>
        <strain>cv. Columbia</strain>
    </source>
</reference>
<reference key="5">
    <citation type="journal article" date="2009" name="J. Proteomics">
        <title>Phosphoproteomic analysis of nuclei-enriched fractions from Arabidopsis thaliana.</title>
        <authorList>
            <person name="Jones A.M.E."/>
            <person name="MacLean D."/>
            <person name="Studholme D.J."/>
            <person name="Serna-Sanz A."/>
            <person name="Andreasson E."/>
            <person name="Rathjen J.P."/>
            <person name="Peck S.C."/>
        </authorList>
    </citation>
    <scope>PHOSPHORYLATION [LARGE SCALE ANALYSIS] AT SER-275</scope>
    <scope>IDENTIFICATION BY MASS SPECTROMETRY [LARGE SCALE ANALYSIS]</scope>
    <source>
        <strain>cv. Columbia</strain>
    </source>
</reference>
<reference key="6">
    <citation type="journal article" date="2010" name="Plant J.">
        <title>Detection of protein-protein interactions in plants using the transrepressive activity of the EAR motif repression domain.</title>
        <authorList>
            <person name="Matsui K."/>
            <person name="Ohme-Takagi M."/>
        </authorList>
    </citation>
    <scope>INTERACTION WITH TBP1</scope>
    <scope>SUBCELLULAR LOCATION</scope>
    <source>
        <strain>cv. Columbia</strain>
    </source>
</reference>
<reference key="7">
    <citation type="journal article" date="2012" name="PLoS ONE">
        <title>A comparative study of the Arabidopsis thaliana guard-cell transcriptome and its modulation by sucrose.</title>
        <authorList>
            <person name="Bates G.W."/>
            <person name="Rosenthal D.M."/>
            <person name="Sun J."/>
            <person name="Chattopadhyay M."/>
            <person name="Peffer E."/>
            <person name="Yang J."/>
            <person name="Ort D.R."/>
            <person name="Jones A.M."/>
        </authorList>
    </citation>
    <scope>FUNCTION</scope>
    <scope>DISRUPTION PHENOTYPE</scope>
    <scope>INDUCTION BY SUCROSE</scope>
    <source>
        <strain>cv. Columbia</strain>
    </source>
</reference>
<reference key="8">
    <citation type="journal article" date="2013" name="PLoS ONE">
        <title>40S ribosome biogenesis co-factors are essential for gametophyte and embryo development.</title>
        <authorList>
            <person name="Missbach S."/>
            <person name="Weis B.L."/>
            <person name="Martin R."/>
            <person name="Simm S."/>
            <person name="Bohnsack M.T."/>
            <person name="Schleiff E."/>
        </authorList>
    </citation>
    <scope>FUNCTION</scope>
    <scope>DISRUPTION PHENOTYPE</scope>
    <scope>SUBCELLULAR LOCATION</scope>
    <scope>TISSUE SPECIFICITY</scope>
    <source>
        <strain>cv. Columbia</strain>
    </source>
</reference>
<gene>
    <name evidence="7" type="primary">PWP2</name>
    <name evidence="10" type="ordered locus">At1g15440</name>
    <name evidence="11" type="ORF">F9L1.40</name>
</gene>
<feature type="chain" id="PRO_0000440648" description="Periodic tryptophan protein 2">
    <location>
        <begin position="1"/>
        <end position="900"/>
    </location>
</feature>
<feature type="repeat" description="WD 1" evidence="2">
    <location>
        <begin position="10"/>
        <end position="47"/>
    </location>
</feature>
<feature type="repeat" description="WD 2" evidence="2">
    <location>
        <begin position="50"/>
        <end position="89"/>
    </location>
</feature>
<feature type="repeat" description="WD 3" evidence="2">
    <location>
        <begin position="91"/>
        <end position="129"/>
    </location>
</feature>
<feature type="repeat" description="WD 4" evidence="2">
    <location>
        <begin position="139"/>
        <end position="178"/>
    </location>
</feature>
<feature type="repeat" description="WD 5" evidence="2">
    <location>
        <begin position="185"/>
        <end position="229"/>
    </location>
</feature>
<feature type="repeat" description="WD 6" evidence="2">
    <location>
        <begin position="302"/>
        <end position="341"/>
    </location>
</feature>
<feature type="repeat" description="WD 7" evidence="2">
    <location>
        <begin position="344"/>
        <end position="384"/>
    </location>
</feature>
<feature type="repeat" description="WD 8" evidence="2">
    <location>
        <begin position="387"/>
        <end position="426"/>
    </location>
</feature>
<feature type="repeat" description="WD 9" evidence="2">
    <location>
        <begin position="429"/>
        <end position="468"/>
    </location>
</feature>
<feature type="repeat" description="WD 10" evidence="2">
    <location>
        <begin position="472"/>
        <end position="512"/>
    </location>
</feature>
<feature type="repeat" description="WD 11" evidence="2">
    <location>
        <begin position="515"/>
        <end position="554"/>
    </location>
</feature>
<feature type="repeat" description="WD 12" evidence="2">
    <location>
        <begin position="557"/>
        <end position="596"/>
    </location>
</feature>
<feature type="repeat" description="WD 13" evidence="2">
    <location>
        <begin position="619"/>
        <end position="658"/>
    </location>
</feature>
<feature type="repeat" description="WD 14" evidence="2">
    <location>
        <begin position="720"/>
        <end position="759"/>
    </location>
</feature>
<feature type="region of interest" description="Disordered" evidence="3">
    <location>
        <begin position="228"/>
        <end position="284"/>
    </location>
</feature>
<feature type="region of interest" description="Disordered" evidence="3">
    <location>
        <begin position="684"/>
        <end position="720"/>
    </location>
</feature>
<feature type="compositionally biased region" description="Basic and acidic residues" evidence="3">
    <location>
        <begin position="261"/>
        <end position="274"/>
    </location>
</feature>
<feature type="compositionally biased region" description="Acidic residues" evidence="3">
    <location>
        <begin position="275"/>
        <end position="284"/>
    </location>
</feature>
<feature type="compositionally biased region" description="Acidic residues" evidence="3">
    <location>
        <begin position="687"/>
        <end position="697"/>
    </location>
</feature>
<feature type="modified residue" description="Phosphoserine" evidence="12">
    <location>
        <position position="275"/>
    </location>
</feature>
<feature type="splice variant" id="VSP_058979" description="In isoform 2.">
    <location>
        <begin position="166"/>
        <end position="205"/>
    </location>
</feature>
<accession>Q8VYZ5</accession>
<accession>F4HZM8</accession>
<accession>Q9XI24</accession>
<organism>
    <name type="scientific">Arabidopsis thaliana</name>
    <name type="common">Mouse-ear cress</name>
    <dbReference type="NCBI Taxonomy" id="3702"/>
    <lineage>
        <taxon>Eukaryota</taxon>
        <taxon>Viridiplantae</taxon>
        <taxon>Streptophyta</taxon>
        <taxon>Embryophyta</taxon>
        <taxon>Tracheophyta</taxon>
        <taxon>Spermatophyta</taxon>
        <taxon>Magnoliopsida</taxon>
        <taxon>eudicotyledons</taxon>
        <taxon>Gunneridae</taxon>
        <taxon>Pentapetalae</taxon>
        <taxon>rosids</taxon>
        <taxon>malvids</taxon>
        <taxon>Brassicales</taxon>
        <taxon>Brassicaceae</taxon>
        <taxon>Camelineae</taxon>
        <taxon>Arabidopsis</taxon>
    </lineage>
</organism>
<evidence type="ECO:0000250" key="1">
    <source>
        <dbReference type="UniProtKB" id="P25635"/>
    </source>
</evidence>
<evidence type="ECO:0000255" key="2"/>
<evidence type="ECO:0000256" key="3">
    <source>
        <dbReference type="SAM" id="MobiDB-lite"/>
    </source>
</evidence>
<evidence type="ECO:0000269" key="4">
    <source>
    </source>
</evidence>
<evidence type="ECO:0000269" key="5">
    <source>
    </source>
</evidence>
<evidence type="ECO:0000269" key="6">
    <source>
    </source>
</evidence>
<evidence type="ECO:0000303" key="7">
    <source>
    </source>
</evidence>
<evidence type="ECO:0000303" key="8">
    <source>
    </source>
</evidence>
<evidence type="ECO:0000305" key="9"/>
<evidence type="ECO:0000312" key="10">
    <source>
        <dbReference type="Araport" id="AT1G15440"/>
    </source>
</evidence>
<evidence type="ECO:0000312" key="11">
    <source>
        <dbReference type="EMBL" id="AAD39674.1"/>
    </source>
</evidence>
<evidence type="ECO:0007744" key="12">
    <source>
    </source>
</evidence>
<keyword id="KW-0025">Alternative splicing</keyword>
<keyword id="KW-0217">Developmental protein</keyword>
<keyword id="KW-0539">Nucleus</keyword>
<keyword id="KW-0597">Phosphoprotein</keyword>
<keyword id="KW-1185">Reference proteome</keyword>
<keyword id="KW-0677">Repeat</keyword>
<keyword id="KW-0687">Ribonucleoprotein</keyword>
<keyword id="KW-0690">Ribosome biogenesis</keyword>
<keyword id="KW-0698">rRNA processing</keyword>
<keyword id="KW-0853">WD repeat</keyword>
<proteinExistence type="evidence at protein level"/>
<dbReference type="EMBL" id="AC007591">
    <property type="protein sequence ID" value="AAD39674.1"/>
    <property type="status" value="ALT_SEQ"/>
    <property type="molecule type" value="Genomic_DNA"/>
</dbReference>
<dbReference type="EMBL" id="CP002684">
    <property type="protein sequence ID" value="AEE29324.1"/>
    <property type="molecule type" value="Genomic_DNA"/>
</dbReference>
<dbReference type="EMBL" id="CP002684">
    <property type="protein sequence ID" value="AEE29325.1"/>
    <property type="molecule type" value="Genomic_DNA"/>
</dbReference>
<dbReference type="EMBL" id="AY065425">
    <property type="protein sequence ID" value="AAL38866.1"/>
    <property type="molecule type" value="mRNA"/>
</dbReference>
<dbReference type="EMBL" id="AY133789">
    <property type="protein sequence ID" value="AAM91723.1"/>
    <property type="molecule type" value="mRNA"/>
</dbReference>
<dbReference type="RefSeq" id="NP_172998.1">
    <molecule id="Q8VYZ5-1"/>
    <property type="nucleotide sequence ID" value="NM_101414.4"/>
</dbReference>
<dbReference type="RefSeq" id="NP_973836.1">
    <molecule id="Q8VYZ5-2"/>
    <property type="nucleotide sequence ID" value="NM_202107.1"/>
</dbReference>
<dbReference type="SMR" id="Q8VYZ5"/>
<dbReference type="FunCoup" id="Q8VYZ5">
    <property type="interactions" value="3259"/>
</dbReference>
<dbReference type="STRING" id="3702.Q8VYZ5"/>
<dbReference type="GlyGen" id="Q8VYZ5">
    <property type="glycosylation" value="1 site"/>
</dbReference>
<dbReference type="iPTMnet" id="Q8VYZ5"/>
<dbReference type="PaxDb" id="3702-AT1G15440.1"/>
<dbReference type="ProteomicsDB" id="226131">
    <molecule id="Q8VYZ5-1"/>
</dbReference>
<dbReference type="EnsemblPlants" id="AT1G15440.1">
    <molecule id="Q8VYZ5-1"/>
    <property type="protein sequence ID" value="AT1G15440.1"/>
    <property type="gene ID" value="AT1G15440"/>
</dbReference>
<dbReference type="EnsemblPlants" id="AT1G15440.2">
    <molecule id="Q8VYZ5-2"/>
    <property type="protein sequence ID" value="AT1G15440.2"/>
    <property type="gene ID" value="AT1G15440"/>
</dbReference>
<dbReference type="GeneID" id="838115"/>
<dbReference type="Gramene" id="AT1G15440.1">
    <molecule id="Q8VYZ5-1"/>
    <property type="protein sequence ID" value="AT1G15440.1"/>
    <property type="gene ID" value="AT1G15440"/>
</dbReference>
<dbReference type="Gramene" id="AT1G15440.2">
    <molecule id="Q8VYZ5-2"/>
    <property type="protein sequence ID" value="AT1G15440.2"/>
    <property type="gene ID" value="AT1G15440"/>
</dbReference>
<dbReference type="KEGG" id="ath:AT1G15440"/>
<dbReference type="Araport" id="AT1G15440"/>
<dbReference type="TAIR" id="AT1G15440">
    <property type="gene designation" value="PWP2"/>
</dbReference>
<dbReference type="eggNOG" id="KOG0291">
    <property type="taxonomic scope" value="Eukaryota"/>
</dbReference>
<dbReference type="InParanoid" id="Q8VYZ5"/>
<dbReference type="OMA" id="VYEWQSE"/>
<dbReference type="PhylomeDB" id="Q8VYZ5"/>
<dbReference type="CD-CODE" id="4299E36E">
    <property type="entry name" value="Nucleolus"/>
</dbReference>
<dbReference type="PRO" id="PR:Q8VYZ5"/>
<dbReference type="Proteomes" id="UP000006548">
    <property type="component" value="Chromosome 1"/>
</dbReference>
<dbReference type="ExpressionAtlas" id="Q8VYZ5">
    <property type="expression patterns" value="baseline and differential"/>
</dbReference>
<dbReference type="GO" id="GO:0080008">
    <property type="term" value="C:Cul4-RING E3 ubiquitin ligase complex"/>
    <property type="evidence" value="ECO:0000250"/>
    <property type="project" value="TAIR"/>
</dbReference>
<dbReference type="GO" id="GO:0005730">
    <property type="term" value="C:nucleolus"/>
    <property type="evidence" value="ECO:0000314"/>
    <property type="project" value="TAIR"/>
</dbReference>
<dbReference type="GO" id="GO:0005634">
    <property type="term" value="C:nucleus"/>
    <property type="evidence" value="ECO:0000314"/>
    <property type="project" value="UniProtKB"/>
</dbReference>
<dbReference type="GO" id="GO:1990904">
    <property type="term" value="C:ribonucleoprotein complex"/>
    <property type="evidence" value="ECO:0007669"/>
    <property type="project" value="UniProtKB-KW"/>
</dbReference>
<dbReference type="GO" id="GO:0009553">
    <property type="term" value="P:embryo sac development"/>
    <property type="evidence" value="ECO:0000315"/>
    <property type="project" value="TAIR"/>
</dbReference>
<dbReference type="GO" id="GO:0010119">
    <property type="term" value="P:regulation of stomatal movement"/>
    <property type="evidence" value="ECO:0000315"/>
    <property type="project" value="UniProtKB"/>
</dbReference>
<dbReference type="GO" id="GO:0009744">
    <property type="term" value="P:response to sucrose"/>
    <property type="evidence" value="ECO:0000270"/>
    <property type="project" value="UniProtKB"/>
</dbReference>
<dbReference type="GO" id="GO:0006364">
    <property type="term" value="P:rRNA processing"/>
    <property type="evidence" value="ECO:0000315"/>
    <property type="project" value="TAIR"/>
</dbReference>
<dbReference type="CDD" id="cd00200">
    <property type="entry name" value="WD40"/>
    <property type="match status" value="1"/>
</dbReference>
<dbReference type="FunFam" id="2.130.10.10:FF:000688">
    <property type="entry name" value="Periodic tryptophan protein 2"/>
    <property type="match status" value="1"/>
</dbReference>
<dbReference type="FunFam" id="2.130.10.10:FF:000900">
    <property type="entry name" value="Periodic tryptophan protein 2"/>
    <property type="match status" value="1"/>
</dbReference>
<dbReference type="Gene3D" id="2.130.10.10">
    <property type="entry name" value="YVTN repeat-like/Quinoprotein amine dehydrogenase"/>
    <property type="match status" value="3"/>
</dbReference>
<dbReference type="InterPro" id="IPR020472">
    <property type="entry name" value="G-protein_beta_WD-40_rep"/>
</dbReference>
<dbReference type="InterPro" id="IPR027145">
    <property type="entry name" value="PWP2"/>
</dbReference>
<dbReference type="InterPro" id="IPR011047">
    <property type="entry name" value="Quinoprotein_ADH-like_sf"/>
</dbReference>
<dbReference type="InterPro" id="IPR007148">
    <property type="entry name" value="SSU_processome_Utp12"/>
</dbReference>
<dbReference type="InterPro" id="IPR015943">
    <property type="entry name" value="WD40/YVTN_repeat-like_dom_sf"/>
</dbReference>
<dbReference type="InterPro" id="IPR019775">
    <property type="entry name" value="WD40_repeat_CS"/>
</dbReference>
<dbReference type="InterPro" id="IPR036322">
    <property type="entry name" value="WD40_repeat_dom_sf"/>
</dbReference>
<dbReference type="InterPro" id="IPR001680">
    <property type="entry name" value="WD40_rpt"/>
</dbReference>
<dbReference type="PANTHER" id="PTHR19858:SF0">
    <property type="entry name" value="PERIODIC TRYPTOPHAN PROTEIN 2 HOMOLOG"/>
    <property type="match status" value="1"/>
</dbReference>
<dbReference type="PANTHER" id="PTHR19858">
    <property type="entry name" value="WD40 REPEAT PROTEIN"/>
    <property type="match status" value="1"/>
</dbReference>
<dbReference type="Pfam" id="PF04003">
    <property type="entry name" value="Utp12"/>
    <property type="match status" value="1"/>
</dbReference>
<dbReference type="Pfam" id="PF00400">
    <property type="entry name" value="WD40"/>
    <property type="match status" value="5"/>
</dbReference>
<dbReference type="PRINTS" id="PR00320">
    <property type="entry name" value="GPROTEINBRPT"/>
</dbReference>
<dbReference type="SMART" id="SM00320">
    <property type="entry name" value="WD40"/>
    <property type="match status" value="10"/>
</dbReference>
<dbReference type="SUPFAM" id="SSF50998">
    <property type="entry name" value="Quinoprotein alcohol dehydrogenase-like"/>
    <property type="match status" value="1"/>
</dbReference>
<dbReference type="SUPFAM" id="SSF50978">
    <property type="entry name" value="WD40 repeat-like"/>
    <property type="match status" value="1"/>
</dbReference>
<dbReference type="PROSITE" id="PS00678">
    <property type="entry name" value="WD_REPEATS_1"/>
    <property type="match status" value="4"/>
</dbReference>
<dbReference type="PROSITE" id="PS50082">
    <property type="entry name" value="WD_REPEATS_2"/>
    <property type="match status" value="4"/>
</dbReference>
<dbReference type="PROSITE" id="PS50294">
    <property type="entry name" value="WD_REPEATS_REGION"/>
    <property type="match status" value="1"/>
</dbReference>
<name>PWP2_ARATH</name>
<protein>
    <recommendedName>
        <fullName evidence="7">Periodic tryptophan protein 2</fullName>
        <shortName evidence="7 8">AtPWP2</shortName>
    </recommendedName>
</protein>